<dbReference type="EC" id="4.1.1.48"/>
<dbReference type="EMBL" id="X92729">
    <property type="protein sequence ID" value="CAA63389.1"/>
    <property type="molecule type" value="Genomic_DNA"/>
</dbReference>
<dbReference type="EMBL" id="AE000512">
    <property type="protein sequence ID" value="AAD35233.1"/>
    <property type="status" value="ALT_INIT"/>
    <property type="molecule type" value="Genomic_DNA"/>
</dbReference>
<dbReference type="PIR" id="S59047">
    <property type="entry name" value="S59047"/>
</dbReference>
<dbReference type="RefSeq" id="NP_227955.1">
    <property type="nucleotide sequence ID" value="NC_000853.1"/>
</dbReference>
<dbReference type="PDB" id="1I4N">
    <property type="method" value="X-ray"/>
    <property type="resolution" value="2.50 A"/>
    <property type="chains" value="A/B=2-252"/>
</dbReference>
<dbReference type="PDB" id="1J5T">
    <property type="method" value="X-ray"/>
    <property type="resolution" value="3.00 A"/>
    <property type="chains" value="A=24-252"/>
</dbReference>
<dbReference type="PDBsum" id="1I4N"/>
<dbReference type="PDBsum" id="1J5T"/>
<dbReference type="SMR" id="Q56319"/>
<dbReference type="FunCoup" id="Q56319">
    <property type="interactions" value="368"/>
</dbReference>
<dbReference type="STRING" id="243274.TM_0140"/>
<dbReference type="PaxDb" id="243274-THEMA_04105"/>
<dbReference type="EnsemblBacteria" id="AAD35233">
    <property type="protein sequence ID" value="AAD35233"/>
    <property type="gene ID" value="TM_0140"/>
</dbReference>
<dbReference type="KEGG" id="tma:TM0140"/>
<dbReference type="KEGG" id="tmi:THEMA_04105"/>
<dbReference type="KEGG" id="tmm:Tmari_0138"/>
<dbReference type="PATRIC" id="fig|243274.5.peg.139"/>
<dbReference type="eggNOG" id="COG0134">
    <property type="taxonomic scope" value="Bacteria"/>
</dbReference>
<dbReference type="InParanoid" id="Q56319"/>
<dbReference type="OrthoDB" id="9804217at2"/>
<dbReference type="BioCyc" id="MetaCyc:MONOMER-343"/>
<dbReference type="BRENDA" id="4.1.1.48">
    <property type="organism ID" value="6331"/>
</dbReference>
<dbReference type="SABIO-RK" id="Q56319"/>
<dbReference type="UniPathway" id="UPA00035">
    <property type="reaction ID" value="UER00043"/>
</dbReference>
<dbReference type="EvolutionaryTrace" id="Q56319"/>
<dbReference type="Proteomes" id="UP000008183">
    <property type="component" value="Chromosome"/>
</dbReference>
<dbReference type="GO" id="GO:0004425">
    <property type="term" value="F:indole-3-glycerol-phosphate synthase activity"/>
    <property type="evidence" value="ECO:0000318"/>
    <property type="project" value="GO_Central"/>
</dbReference>
<dbReference type="GO" id="GO:0004640">
    <property type="term" value="F:phosphoribosylanthranilate isomerase activity"/>
    <property type="evidence" value="ECO:0000318"/>
    <property type="project" value="GO_Central"/>
</dbReference>
<dbReference type="GO" id="GO:0000162">
    <property type="term" value="P:L-tryptophan biosynthetic process"/>
    <property type="evidence" value="ECO:0000318"/>
    <property type="project" value="GO_Central"/>
</dbReference>
<dbReference type="CDD" id="cd00331">
    <property type="entry name" value="IGPS"/>
    <property type="match status" value="1"/>
</dbReference>
<dbReference type="FunFam" id="3.20.20.70:FF:000024">
    <property type="entry name" value="Indole-3-glycerol phosphate synthase"/>
    <property type="match status" value="1"/>
</dbReference>
<dbReference type="Gene3D" id="3.20.20.70">
    <property type="entry name" value="Aldolase class I"/>
    <property type="match status" value="1"/>
</dbReference>
<dbReference type="HAMAP" id="MF_00134_B">
    <property type="entry name" value="IGPS_B"/>
    <property type="match status" value="1"/>
</dbReference>
<dbReference type="InterPro" id="IPR013785">
    <property type="entry name" value="Aldolase_TIM"/>
</dbReference>
<dbReference type="InterPro" id="IPR045186">
    <property type="entry name" value="Indole-3-glycerol_P_synth"/>
</dbReference>
<dbReference type="InterPro" id="IPR013798">
    <property type="entry name" value="Indole-3-glycerol_P_synth_dom"/>
</dbReference>
<dbReference type="InterPro" id="IPR001468">
    <property type="entry name" value="Indole-3-GlycerolPSynthase_CS"/>
</dbReference>
<dbReference type="InterPro" id="IPR011060">
    <property type="entry name" value="RibuloseP-bd_barrel"/>
</dbReference>
<dbReference type="PANTHER" id="PTHR22854:SF2">
    <property type="entry name" value="INDOLE-3-GLYCEROL-PHOSPHATE SYNTHASE"/>
    <property type="match status" value="1"/>
</dbReference>
<dbReference type="PANTHER" id="PTHR22854">
    <property type="entry name" value="TRYPTOPHAN BIOSYNTHESIS PROTEIN"/>
    <property type="match status" value="1"/>
</dbReference>
<dbReference type="Pfam" id="PF00218">
    <property type="entry name" value="IGPS"/>
    <property type="match status" value="1"/>
</dbReference>
<dbReference type="SUPFAM" id="SSF51366">
    <property type="entry name" value="Ribulose-phoshate binding barrel"/>
    <property type="match status" value="1"/>
</dbReference>
<dbReference type="PROSITE" id="PS00614">
    <property type="entry name" value="IGPS"/>
    <property type="match status" value="1"/>
</dbReference>
<organism>
    <name type="scientific">Thermotoga maritima (strain ATCC 43589 / DSM 3109 / JCM 10099 / NBRC 100826 / MSB8)</name>
    <dbReference type="NCBI Taxonomy" id="243274"/>
    <lineage>
        <taxon>Bacteria</taxon>
        <taxon>Thermotogati</taxon>
        <taxon>Thermotogota</taxon>
        <taxon>Thermotogae</taxon>
        <taxon>Thermotogales</taxon>
        <taxon>Thermotogaceae</taxon>
        <taxon>Thermotoga</taxon>
    </lineage>
</organism>
<feature type="chain" id="PRO_0000154266" description="Indole-3-glycerol phosphate synthase">
    <location>
        <begin position="1"/>
        <end position="252"/>
    </location>
</feature>
<feature type="sequence conflict" description="In Ref. 1; CAA63389." evidence="1" ref="1">
    <original>N</original>
    <variation>K</variation>
    <location>
        <position position="226"/>
    </location>
</feature>
<feature type="helix" evidence="2">
    <location>
        <begin position="4"/>
        <end position="14"/>
    </location>
</feature>
<feature type="helix" evidence="2">
    <location>
        <begin position="15"/>
        <end position="17"/>
    </location>
</feature>
<feature type="helix" evidence="2">
    <location>
        <begin position="20"/>
        <end position="22"/>
    </location>
</feature>
<feature type="helix" evidence="2">
    <location>
        <begin position="31"/>
        <end position="36"/>
    </location>
</feature>
<feature type="strand" evidence="2">
    <location>
        <begin position="39"/>
        <end position="41"/>
    </location>
</feature>
<feature type="strand" evidence="2">
    <location>
        <begin position="43"/>
        <end position="48"/>
    </location>
</feature>
<feature type="strand" evidence="2">
    <location>
        <begin position="53"/>
        <end position="55"/>
    </location>
</feature>
<feature type="helix" evidence="2">
    <location>
        <begin position="64"/>
        <end position="74"/>
    </location>
</feature>
<feature type="strand" evidence="2">
    <location>
        <begin position="76"/>
        <end position="81"/>
    </location>
</feature>
<feature type="strand" evidence="2">
    <location>
        <begin position="85"/>
        <end position="87"/>
    </location>
</feature>
<feature type="helix" evidence="2">
    <location>
        <begin position="92"/>
        <end position="98"/>
    </location>
</feature>
<feature type="strand" evidence="2">
    <location>
        <begin position="105"/>
        <end position="108"/>
    </location>
</feature>
<feature type="helix" evidence="2">
    <location>
        <begin position="115"/>
        <end position="122"/>
    </location>
</feature>
<feature type="strand" evidence="2">
    <location>
        <begin position="126"/>
        <end position="131"/>
    </location>
</feature>
<feature type="helix" evidence="2">
    <location>
        <begin position="132"/>
        <end position="134"/>
    </location>
</feature>
<feature type="helix" evidence="2">
    <location>
        <begin position="137"/>
        <end position="148"/>
    </location>
</feature>
<feature type="turn" evidence="2">
    <location>
        <begin position="149"/>
        <end position="151"/>
    </location>
</feature>
<feature type="strand" evidence="2">
    <location>
        <begin position="153"/>
        <end position="158"/>
    </location>
</feature>
<feature type="helix" evidence="2">
    <location>
        <begin position="161"/>
        <end position="168"/>
    </location>
</feature>
<feature type="strand" evidence="2">
    <location>
        <begin position="174"/>
        <end position="179"/>
    </location>
</feature>
<feature type="turn" evidence="2">
    <location>
        <begin position="183"/>
        <end position="185"/>
    </location>
</feature>
<feature type="helix" evidence="2">
    <location>
        <begin position="192"/>
        <end position="196"/>
    </location>
</feature>
<feature type="helix" evidence="2">
    <location>
        <begin position="197"/>
        <end position="199"/>
    </location>
</feature>
<feature type="strand" evidence="2">
    <location>
        <begin position="204"/>
        <end position="210"/>
    </location>
</feature>
<feature type="helix" evidence="2">
    <location>
        <begin position="215"/>
        <end position="217"/>
    </location>
</feature>
<feature type="helix" evidence="2">
    <location>
        <begin position="218"/>
        <end position="221"/>
    </location>
</feature>
<feature type="turn" evidence="2">
    <location>
        <begin position="222"/>
        <end position="224"/>
    </location>
</feature>
<feature type="strand" evidence="2">
    <location>
        <begin position="226"/>
        <end position="230"/>
    </location>
</feature>
<feature type="helix" evidence="2">
    <location>
        <begin position="232"/>
        <end position="236"/>
    </location>
</feature>
<feature type="strand" evidence="3">
    <location>
        <begin position="237"/>
        <end position="239"/>
    </location>
</feature>
<feature type="helix" evidence="2">
    <location>
        <begin position="240"/>
        <end position="250"/>
    </location>
</feature>
<proteinExistence type="evidence at protein level"/>
<accession>Q56319</accession>
<reference key="1">
    <citation type="journal article" date="1995" name="EMBO J.">
        <title>(Beta alpha)8-barrel proteins of tryptophan biosynthesis in the hyperthermophile Thermotoga maritima.</title>
        <authorList>
            <person name="Sterner R."/>
            <person name="Dahm A."/>
            <person name="Darimont B."/>
            <person name="Ivens A."/>
            <person name="Liebl W."/>
            <person name="Kirschner K."/>
        </authorList>
    </citation>
    <scope>NUCLEOTIDE SEQUENCE [GENOMIC DNA]</scope>
    <scope>PARTIAL PROTEIN SEQUENCE</scope>
</reference>
<reference key="2">
    <citation type="journal article" date="1999" name="Nature">
        <title>Evidence for lateral gene transfer between Archaea and Bacteria from genome sequence of Thermotoga maritima.</title>
        <authorList>
            <person name="Nelson K.E."/>
            <person name="Clayton R.A."/>
            <person name="Gill S.R."/>
            <person name="Gwinn M.L."/>
            <person name="Dodson R.J."/>
            <person name="Haft D.H."/>
            <person name="Hickey E.K."/>
            <person name="Peterson J.D."/>
            <person name="Nelson W.C."/>
            <person name="Ketchum K.A."/>
            <person name="McDonald L.A."/>
            <person name="Utterback T.R."/>
            <person name="Malek J.A."/>
            <person name="Linher K.D."/>
            <person name="Garrett M.M."/>
            <person name="Stewart A.M."/>
            <person name="Cotton M.D."/>
            <person name="Pratt M.S."/>
            <person name="Phillips C.A."/>
            <person name="Richardson D.L."/>
            <person name="Heidelberg J.F."/>
            <person name="Sutton G.G."/>
            <person name="Fleischmann R.D."/>
            <person name="Eisen J.A."/>
            <person name="White O."/>
            <person name="Salzberg S.L."/>
            <person name="Smith H.O."/>
            <person name="Venter J.C."/>
            <person name="Fraser C.M."/>
        </authorList>
    </citation>
    <scope>NUCLEOTIDE SEQUENCE [LARGE SCALE GENOMIC DNA]</scope>
    <source>
        <strain>ATCC 43589 / DSM 3109 / JCM 10099 / NBRC 100826 / MSB8</strain>
    </source>
</reference>
<keyword id="KW-0002">3D-structure</keyword>
<keyword id="KW-0028">Amino-acid biosynthesis</keyword>
<keyword id="KW-0057">Aromatic amino acid biosynthesis</keyword>
<keyword id="KW-0210">Decarboxylase</keyword>
<keyword id="KW-0903">Direct protein sequencing</keyword>
<keyword id="KW-0456">Lyase</keyword>
<keyword id="KW-1185">Reference proteome</keyword>
<keyword id="KW-0822">Tryptophan biosynthesis</keyword>
<comment type="catalytic activity">
    <reaction>
        <text>1-(2-carboxyphenylamino)-1-deoxy-D-ribulose 5-phosphate + H(+) = (1S,2R)-1-C-(indol-3-yl)glycerol 3-phosphate + CO2 + H2O</text>
        <dbReference type="Rhea" id="RHEA:23476"/>
        <dbReference type="ChEBI" id="CHEBI:15377"/>
        <dbReference type="ChEBI" id="CHEBI:15378"/>
        <dbReference type="ChEBI" id="CHEBI:16526"/>
        <dbReference type="ChEBI" id="CHEBI:58613"/>
        <dbReference type="ChEBI" id="CHEBI:58866"/>
        <dbReference type="EC" id="4.1.1.48"/>
    </reaction>
</comment>
<comment type="pathway">
    <text>Amino-acid biosynthesis; L-tryptophan biosynthesis; L-tryptophan from chorismate: step 4/5.</text>
</comment>
<comment type="similarity">
    <text evidence="1">Belongs to the TrpC family.</text>
</comment>
<comment type="sequence caution" evidence="1">
    <conflict type="erroneous initiation">
        <sequence resource="EMBL-CDS" id="AAD35233"/>
    </conflict>
</comment>
<evidence type="ECO:0000305" key="1"/>
<evidence type="ECO:0007829" key="2">
    <source>
        <dbReference type="PDB" id="1I4N"/>
    </source>
</evidence>
<evidence type="ECO:0007829" key="3">
    <source>
        <dbReference type="PDB" id="1J5T"/>
    </source>
</evidence>
<protein>
    <recommendedName>
        <fullName>Indole-3-glycerol phosphate synthase</fullName>
        <shortName>IGPS</shortName>
        <ecNumber>4.1.1.48</ecNumber>
    </recommendedName>
</protein>
<gene>
    <name type="primary">trpC</name>
    <name type="ordered locus">TM_0140</name>
</gene>
<name>TRPC_THEMA</name>
<sequence length="252" mass="28660">MRRLWEIVEAKKKDILEIDGENLIVQRRNHRFLEVLSGKERVKIIAEFKKASPSAGDINADASLEDFIRMYDELADAISILTEKHYFKGDPAFVRAARNLTCRPILAKDFYIDTVQVKLASSVGADAILIIARILTAEQIKEIYEAAEELGMDSLVEVHSREDLEKVFSVIRPKIIGINTRDLDTFEIKKNVLWELLPLVPDDTVVVAESGIKDPRELKDLRGKVNAVLVGTSIMKAENPRRFLEEMRAWSE</sequence>